<comment type="function">
    <text evidence="1">Usually encoded in the trnK tRNA gene intron. Probably assists in splicing its own and other chloroplast group II introns.</text>
</comment>
<comment type="subcellular location">
    <subcellularLocation>
        <location>Plastid</location>
        <location>Chloroplast</location>
    </subcellularLocation>
</comment>
<comment type="similarity">
    <text evidence="1">Belongs to the intron maturase 2 family. MatK subfamily.</text>
</comment>
<protein>
    <recommendedName>
        <fullName evidence="1">Maturase K</fullName>
    </recommendedName>
    <alternativeName>
        <fullName evidence="1">Intron maturase</fullName>
    </alternativeName>
</protein>
<geneLocation type="chloroplast"/>
<keyword id="KW-0150">Chloroplast</keyword>
<keyword id="KW-0507">mRNA processing</keyword>
<keyword id="KW-0934">Plastid</keyword>
<keyword id="KW-0694">RNA-binding</keyword>
<keyword id="KW-0819">tRNA processing</keyword>
<dbReference type="EMBL" id="AF123480">
    <property type="protein sequence ID" value="AAF43258.1"/>
    <property type="molecule type" value="Genomic_DNA"/>
</dbReference>
<dbReference type="EMBL" id="DQ899947">
    <property type="protein sequence ID" value="ABI32490.1"/>
    <property type="molecule type" value="Genomic_DNA"/>
</dbReference>
<dbReference type="RefSeq" id="YP_740183.1">
    <property type="nucleotide sequence ID" value="NC_008326.1"/>
</dbReference>
<dbReference type="GeneID" id="4266582"/>
<dbReference type="GO" id="GO:0009507">
    <property type="term" value="C:chloroplast"/>
    <property type="evidence" value="ECO:0007669"/>
    <property type="project" value="UniProtKB-SubCell"/>
</dbReference>
<dbReference type="GO" id="GO:0003723">
    <property type="term" value="F:RNA binding"/>
    <property type="evidence" value="ECO:0007669"/>
    <property type="project" value="UniProtKB-KW"/>
</dbReference>
<dbReference type="GO" id="GO:0006397">
    <property type="term" value="P:mRNA processing"/>
    <property type="evidence" value="ECO:0007669"/>
    <property type="project" value="UniProtKB-KW"/>
</dbReference>
<dbReference type="GO" id="GO:0008380">
    <property type="term" value="P:RNA splicing"/>
    <property type="evidence" value="ECO:0007669"/>
    <property type="project" value="UniProtKB-UniRule"/>
</dbReference>
<dbReference type="GO" id="GO:0008033">
    <property type="term" value="P:tRNA processing"/>
    <property type="evidence" value="ECO:0007669"/>
    <property type="project" value="UniProtKB-KW"/>
</dbReference>
<dbReference type="HAMAP" id="MF_01390">
    <property type="entry name" value="MatK"/>
    <property type="match status" value="1"/>
</dbReference>
<dbReference type="InterPro" id="IPR024937">
    <property type="entry name" value="Domain_X"/>
</dbReference>
<dbReference type="InterPro" id="IPR002866">
    <property type="entry name" value="Maturase_MatK"/>
</dbReference>
<dbReference type="InterPro" id="IPR024942">
    <property type="entry name" value="Maturase_MatK_N"/>
</dbReference>
<dbReference type="PANTHER" id="PTHR34811">
    <property type="entry name" value="MATURASE K"/>
    <property type="match status" value="1"/>
</dbReference>
<dbReference type="PANTHER" id="PTHR34811:SF1">
    <property type="entry name" value="MATURASE K"/>
    <property type="match status" value="1"/>
</dbReference>
<dbReference type="Pfam" id="PF01348">
    <property type="entry name" value="Intron_maturas2"/>
    <property type="match status" value="1"/>
</dbReference>
<dbReference type="Pfam" id="PF01824">
    <property type="entry name" value="MatK_N"/>
    <property type="match status" value="1"/>
</dbReference>
<reference key="1">
    <citation type="journal article" date="2000" name="Theor. Appl. Genet.">
        <title>Phylogenetic relationships of the Magnoliaceae inferred from cpDNA matK sequences.</title>
        <authorList>
            <person name="Shi S."/>
            <person name="Jin H."/>
            <person name="Zhong Y."/>
            <person name="He X."/>
            <person name="Huang Y."/>
            <person name="Tan F."/>
            <person name="Boufford D.E."/>
        </authorList>
        <dbReference type="AGRICOLA" id="IND22081501"/>
    </citation>
    <scope>NUCLEOTIDE SEQUENCE [GENOMIC DNA]</scope>
</reference>
<reference key="2">
    <citation type="journal article" date="2006" name="BMC Evol. Biol.">
        <title>Complete plastid genome sequences of Drimys, Liriodendron, and Piper: implications for the phylogenetic relationships of magnoliids.</title>
        <authorList>
            <person name="Cai Z."/>
            <person name="Penaflor C."/>
            <person name="Kuehl J.V."/>
            <person name="Leebens-Mack J."/>
            <person name="Carlson J.E."/>
            <person name="dePamphilis C.W."/>
            <person name="Boore J.L."/>
            <person name="Jansen R.K."/>
        </authorList>
    </citation>
    <scope>NUCLEOTIDE SEQUENCE [LARGE SCALE GENOMIC DNA]</scope>
</reference>
<accession>Q7J1C8</accession>
<accession>Q0G9N8</accession>
<evidence type="ECO:0000255" key="1">
    <source>
        <dbReference type="HAMAP-Rule" id="MF_01390"/>
    </source>
</evidence>
<evidence type="ECO:0000305" key="2"/>
<organism>
    <name type="scientific">Liriodendron tulipifera</name>
    <name type="common">Tuliptree</name>
    <name type="synonym">Tulip poplar</name>
    <dbReference type="NCBI Taxonomy" id="3415"/>
    <lineage>
        <taxon>Eukaryota</taxon>
        <taxon>Viridiplantae</taxon>
        <taxon>Streptophyta</taxon>
        <taxon>Embryophyta</taxon>
        <taxon>Tracheophyta</taxon>
        <taxon>Spermatophyta</taxon>
        <taxon>Magnoliopsida</taxon>
        <taxon>Magnoliidae</taxon>
        <taxon>Magnoliales</taxon>
        <taxon>Magnoliaceae</taxon>
        <taxon>Liriodendron</taxon>
    </lineage>
</organism>
<sequence length="507" mass="59867">MEELQGYLEIDRSRQQHFLYPLLFQEYIYALAHDHGLNGSIFYEPMENLGYDNKSSSLIVKRLITRMHQQNHLIISVNDSNENGFVGHNKSFYSQMVSEGFAVIMEIPFSLRLVSSLEEKEIAKSHNLRSIHSIFPFFEDKLSHLNHVSDILIPHPIHLEILVQTLHCWIQDAPSLHLLRFFLHEYRNSNSLITPKKSISLFSKENQRFFLFLYNSHVYECESVLVFLRKQSSHLRSTSSGTFLERTHFYGKIEHLVVVLRNDFQKTLWLFKDPFMHYVRYQGKYILASKGTHLLMKKWKSHLVNFWQCHFYLWSRPDRIHINQLYNHSFYFLGYLSSVRLNTSAVRIQMLENSFLIDTSINKFETLVPIISLIGSVAKAKFCNVSGHPISKSVRADSSDSDIINRFGRIYRNLSHYHSGSSKKQTLYRIKYILRLSCARTLARKHKSTVRAFLKRLGSEFLEEFLTEEEQVLSLIFQRNSFPSYRSHRERIWYLDIIRINDLANHS</sequence>
<gene>
    <name evidence="1" type="primary">matK</name>
</gene>
<proteinExistence type="inferred from homology"/>
<name>MATK_LIRTU</name>
<feature type="chain" id="PRO_0000143487" description="Maturase K">
    <location>
        <begin position="1"/>
        <end position="507"/>
    </location>
</feature>
<feature type="sequence conflict" description="In Ref. 1; AAF43258." evidence="2" ref="1">
    <original>H</original>
    <variation>R</variation>
    <location>
        <position position="88"/>
    </location>
</feature>
<feature type="sequence conflict" description="In Ref. 1; AAF43258." evidence="2" ref="1">
    <original>S</original>
    <variation>Y</variation>
    <location>
        <position position="125"/>
    </location>
</feature>
<feature type="sequence conflict" description="In Ref. 1; AAF43258." evidence="2" ref="1">
    <original>FS</original>
    <variation>LK</variation>
    <location>
        <begin position="202"/>
        <end position="203"/>
    </location>
</feature>
<feature type="sequence conflict" description="In Ref. 1; AAF43258." evidence="2" ref="1">
    <original>AVR</original>
    <variation>VVG</variation>
    <location>
        <begin position="345"/>
        <end position="347"/>
    </location>
</feature>
<feature type="sequence conflict" description="In Ref. 1; AAF43258." evidence="2" ref="1">
    <original>A</original>
    <variation>V</variation>
    <location>
        <position position="378"/>
    </location>
</feature>
<feature type="sequence conflict" description="In Ref. 1; AAF43258." evidence="2" ref="1">
    <original>R</original>
    <variation>Q</variation>
    <location>
        <position position="409"/>
    </location>
</feature>